<gene>
    <name type="primary">CKS2</name>
</gene>
<feature type="chain" id="PRO_0000260447" description="Cyclin-dependent kinases regulatory subunit 2">
    <location>
        <begin position="1"/>
        <end position="79"/>
    </location>
</feature>
<feature type="modified residue" description="N6-acetyllysine" evidence="2">
    <location>
        <position position="4"/>
    </location>
</feature>
<evidence type="ECO:0000250" key="1"/>
<evidence type="ECO:0000250" key="2">
    <source>
        <dbReference type="UniProtKB" id="P33552"/>
    </source>
</evidence>
<evidence type="ECO:0000305" key="3"/>
<comment type="function">
    <text evidence="1">Binds to the catalytic subunit of the cyclin dependent kinases and is essential for their biological function.</text>
</comment>
<comment type="subunit">
    <text evidence="1">Forms a homohexamer that can probably bind six kinase subunits.</text>
</comment>
<comment type="similarity">
    <text evidence="3">Belongs to the CKS family.</text>
</comment>
<reference key="1">
    <citation type="submission" date="2005-09" db="EMBL/GenBank/DDBJ databases">
        <authorList>
            <consortium name="NIH - Mammalian Gene Collection (MGC) project"/>
        </authorList>
    </citation>
    <scope>NUCLEOTIDE SEQUENCE [LARGE SCALE MRNA]</scope>
    <source>
        <strain>Crossbred X Angus</strain>
        <tissue>Ileum</tissue>
    </source>
</reference>
<name>CKS2_BOVIN</name>
<keyword id="KW-0007">Acetylation</keyword>
<keyword id="KW-0131">Cell cycle</keyword>
<keyword id="KW-0132">Cell division</keyword>
<keyword id="KW-1185">Reference proteome</keyword>
<protein>
    <recommendedName>
        <fullName>Cyclin-dependent kinases regulatory subunit 2</fullName>
        <shortName>CKS-2</shortName>
    </recommendedName>
</protein>
<organism>
    <name type="scientific">Bos taurus</name>
    <name type="common">Bovine</name>
    <dbReference type="NCBI Taxonomy" id="9913"/>
    <lineage>
        <taxon>Eukaryota</taxon>
        <taxon>Metazoa</taxon>
        <taxon>Chordata</taxon>
        <taxon>Craniata</taxon>
        <taxon>Vertebrata</taxon>
        <taxon>Euteleostomi</taxon>
        <taxon>Mammalia</taxon>
        <taxon>Eutheria</taxon>
        <taxon>Laurasiatheria</taxon>
        <taxon>Artiodactyla</taxon>
        <taxon>Ruminantia</taxon>
        <taxon>Pecora</taxon>
        <taxon>Bovidae</taxon>
        <taxon>Bovinae</taxon>
        <taxon>Bos</taxon>
    </lineage>
</organism>
<dbReference type="EMBL" id="BC105331">
    <property type="protein sequence ID" value="AAI05332.1"/>
    <property type="molecule type" value="mRNA"/>
</dbReference>
<dbReference type="RefSeq" id="NP_001106790.1">
    <property type="nucleotide sequence ID" value="NM_001113319.2"/>
</dbReference>
<dbReference type="SMR" id="Q2KJI1"/>
<dbReference type="FunCoup" id="Q2KJI1">
    <property type="interactions" value="1376"/>
</dbReference>
<dbReference type="STRING" id="9913.ENSBTAP00000002522"/>
<dbReference type="PaxDb" id="9913-ENSBTAP00000002522"/>
<dbReference type="Ensembl" id="ENSBTAT00000002522.5">
    <property type="protein sequence ID" value="ENSBTAP00000002522.3"/>
    <property type="gene ID" value="ENSBTAG00000001938.5"/>
</dbReference>
<dbReference type="GeneID" id="767985"/>
<dbReference type="KEGG" id="bta:767985"/>
<dbReference type="CTD" id="1164"/>
<dbReference type="VEuPathDB" id="HostDB:ENSBTAG00000001938"/>
<dbReference type="VGNC" id="VGNC:27388">
    <property type="gene designation" value="CKS2"/>
</dbReference>
<dbReference type="eggNOG" id="KOG3484">
    <property type="taxonomic scope" value="Eukaryota"/>
</dbReference>
<dbReference type="GeneTree" id="ENSGT00950000182971"/>
<dbReference type="HOGENOM" id="CLU_140546_2_0_1"/>
<dbReference type="InParanoid" id="Q2KJI1"/>
<dbReference type="OMA" id="MHEPEPH"/>
<dbReference type="OrthoDB" id="440676at2759"/>
<dbReference type="TreeFam" id="TF101142"/>
<dbReference type="Proteomes" id="UP000009136">
    <property type="component" value="Chromosome 8"/>
</dbReference>
<dbReference type="Bgee" id="ENSBTAG00000001938">
    <property type="expression patterns" value="Expressed in oocyte and 104 other cell types or tissues"/>
</dbReference>
<dbReference type="GO" id="GO:0000307">
    <property type="term" value="C:cyclin-dependent protein kinase holoenzyme complex"/>
    <property type="evidence" value="ECO:0000318"/>
    <property type="project" value="GO_Central"/>
</dbReference>
<dbReference type="GO" id="GO:0019005">
    <property type="term" value="C:SCF ubiquitin ligase complex"/>
    <property type="evidence" value="ECO:0000318"/>
    <property type="project" value="GO_Central"/>
</dbReference>
<dbReference type="GO" id="GO:0003682">
    <property type="term" value="F:chromatin binding"/>
    <property type="evidence" value="ECO:0007669"/>
    <property type="project" value="Ensembl"/>
</dbReference>
<dbReference type="GO" id="GO:0061575">
    <property type="term" value="F:cyclin-dependent protein serine/threonine kinase activator activity"/>
    <property type="evidence" value="ECO:0000318"/>
    <property type="project" value="GO_Central"/>
</dbReference>
<dbReference type="GO" id="GO:0042393">
    <property type="term" value="F:histone binding"/>
    <property type="evidence" value="ECO:0000318"/>
    <property type="project" value="GO_Central"/>
</dbReference>
<dbReference type="GO" id="GO:0019901">
    <property type="term" value="F:protein kinase binding"/>
    <property type="evidence" value="ECO:0000318"/>
    <property type="project" value="GO_Central"/>
</dbReference>
<dbReference type="GO" id="GO:0043130">
    <property type="term" value="F:ubiquitin binding"/>
    <property type="evidence" value="ECO:0000318"/>
    <property type="project" value="GO_Central"/>
</dbReference>
<dbReference type="GO" id="GO:0051301">
    <property type="term" value="P:cell division"/>
    <property type="evidence" value="ECO:0007669"/>
    <property type="project" value="UniProtKB-KW"/>
</dbReference>
<dbReference type="GO" id="GO:0048144">
    <property type="term" value="P:fibroblast proliferation"/>
    <property type="evidence" value="ECO:0007669"/>
    <property type="project" value="Ensembl"/>
</dbReference>
<dbReference type="GO" id="GO:0007127">
    <property type="term" value="P:meiosis I"/>
    <property type="evidence" value="ECO:0007669"/>
    <property type="project" value="Ensembl"/>
</dbReference>
<dbReference type="GO" id="GO:0044772">
    <property type="term" value="P:mitotic cell cycle phase transition"/>
    <property type="evidence" value="ECO:0007669"/>
    <property type="project" value="Ensembl"/>
</dbReference>
<dbReference type="GO" id="GO:0007346">
    <property type="term" value="P:regulation of mitotic cell cycle"/>
    <property type="evidence" value="ECO:0000318"/>
    <property type="project" value="GO_Central"/>
</dbReference>
<dbReference type="GO" id="GO:0006357">
    <property type="term" value="P:regulation of transcription by RNA polymerase II"/>
    <property type="evidence" value="ECO:0007669"/>
    <property type="project" value="Ensembl"/>
</dbReference>
<dbReference type="FunFam" id="3.30.170.10:FF:000001">
    <property type="entry name" value="Cyclin-dependent kinases regulatory subunit"/>
    <property type="match status" value="1"/>
</dbReference>
<dbReference type="Gene3D" id="3.30.170.10">
    <property type="entry name" value="Cyclin-dependent kinase, regulatory subunit"/>
    <property type="match status" value="1"/>
</dbReference>
<dbReference type="InterPro" id="IPR000789">
    <property type="entry name" value="Cyclin-dep_kinase_reg-sub"/>
</dbReference>
<dbReference type="InterPro" id="IPR036858">
    <property type="entry name" value="Cyclin-dep_kinase_reg-sub_sf"/>
</dbReference>
<dbReference type="PANTHER" id="PTHR23415">
    <property type="entry name" value="CYCLIN-DEPENDENT KINASES REGULATORY SUBUNIT/60S RIBOSOME SUBUNIT BIOGENESIS PROTEIN NIP7"/>
    <property type="match status" value="1"/>
</dbReference>
<dbReference type="Pfam" id="PF01111">
    <property type="entry name" value="CKS"/>
    <property type="match status" value="1"/>
</dbReference>
<dbReference type="PRINTS" id="PR00296">
    <property type="entry name" value="CYCLINKINASE"/>
</dbReference>
<dbReference type="SMART" id="SM01084">
    <property type="entry name" value="CKS"/>
    <property type="match status" value="1"/>
</dbReference>
<dbReference type="SUPFAM" id="SSF55637">
    <property type="entry name" value="Cell cycle regulatory proteins"/>
    <property type="match status" value="1"/>
</dbReference>
<dbReference type="PROSITE" id="PS00944">
    <property type="entry name" value="CKS_1"/>
    <property type="match status" value="1"/>
</dbReference>
<dbReference type="PROSITE" id="PS00945">
    <property type="entry name" value="CKS_2"/>
    <property type="match status" value="1"/>
</dbReference>
<proteinExistence type="inferred from homology"/>
<sequence length="79" mass="9860">MAHKQIYYSDKYFDEHYEYRHVMLPRELSKQVPKTHLMSEEEWRRLGVQQSLGWVHYMIHEPEPHILLFRRPLPKDQQK</sequence>
<accession>Q2KJI1</accession>